<evidence type="ECO:0000250" key="1"/>
<evidence type="ECO:0000255" key="2"/>
<evidence type="ECO:0000255" key="3">
    <source>
        <dbReference type="PROSITE-ProRule" id="PRU00122"/>
    </source>
</evidence>
<evidence type="ECO:0000255" key="4">
    <source>
        <dbReference type="PROSITE-ProRule" id="PRU00458"/>
    </source>
</evidence>
<evidence type="ECO:0000255" key="5">
    <source>
        <dbReference type="PROSITE-ProRule" id="PRU00460"/>
    </source>
</evidence>
<evidence type="ECO:0000255" key="6">
    <source>
        <dbReference type="PROSITE-ProRule" id="PRU00466"/>
    </source>
</evidence>
<evidence type="ECO:0000269" key="7">
    <source>
    </source>
</evidence>
<evidence type="ECO:0000303" key="8">
    <source>
    </source>
</evidence>
<evidence type="ECO:0000305" key="9"/>
<keyword id="KW-0025">Alternative splicing</keyword>
<keyword id="KW-0084">Basement membrane</keyword>
<keyword id="KW-0130">Cell adhesion</keyword>
<keyword id="KW-0175">Coiled coil</keyword>
<keyword id="KW-0903">Direct protein sequencing</keyword>
<keyword id="KW-1015">Disulfide bond</keyword>
<keyword id="KW-0272">Extracellular matrix</keyword>
<keyword id="KW-0325">Glycoprotein</keyword>
<keyword id="KW-0424">Laminin EGF-like domain</keyword>
<keyword id="KW-1185">Reference proteome</keyword>
<keyword id="KW-0677">Repeat</keyword>
<keyword id="KW-0964">Secreted</keyword>
<keyword id="KW-0732">Signal</keyword>
<sequence length="3330" mass="366227">MAVALGRAPRSLPLLLTLLLLLLLRMSPSWSVVGQDHPMSSRSLHPPYFNLAQAARIWATATCGERDPEVSRPRPELFCKLVGGPAAQGSGHTIQGQFCDYCNSEDSRKAHPASHAIDGSERWWQSPPLSSGTQYNQVNLTLDLGQLFHVAYILIKFANSPRPDLWILERSVDFGSTYSPWQYFAHSRRDCVEQFGQEANMAITQDDQMLCVTEYSRIVPLENGEIVVSLINGRPGAKKFAFSDTLREFTKATNIRLRFLRTNTLLGHLISKAERDPTVTRRYYYSIKDISVGGRCVCNGHAEACSADNPEKQFRCECQHHTCGDTCNRCCAGYNQRRWQPAGQEQHNECEACNCHGHAVDCYYDPDVEHQQASLNSKGVYAGGGVCINCQHNTAGVNCEKCAKGYFRPHGVPVDALHGCIPCSCDPERADDCDQGSGHCHCKPNFSGDYCETCADGYYNFPFCLRIPVFPNYTPSPEDPVAGNIKGCDCNLEGVLPEICDDRGRCLCRPGVEGPQCDSCRSGSYSFPICQACQCSTIGSYPVPCDPGNGQCDCLPGITGRQCDRCLSGAYDFPYCQGSGSVCHPAGTLDSSLGYCQCKQHVASPTCSVCKPLYWNLAKENPRGCSECQCHEAGTLSGIGECGQEDGDCSCKAHVTGDACDTCEDGFFSLEKSNYFGCQGCQCDIGGALTTMCSGPSGVCQCREHVEGKQCQRPENNYYFPDLHHMKYEVEDGTGPNGRNLRFGFDPLVFPEFSWRGYAPMTSVQNEVRVRLSVRQSSLSLFRIVLRYISPGTEAISGRITLYSSQGDSDALQSRKITFPPSKEPAFVTVPGNGFAGPFSITPGTWIACIQVEGVLLDYLVLLPRDYYEAFTLQVPVTEPCAHTGSPQDNCLLYQHLPLTAFSCTLACEARHFLLDGELRPLAMRQPTPTHPAMVDLSGREVELQLRLRVPQVGHYVVLLEYATEVEQLFVVDVNLKSSGSALAGQVNIYSCKYSIPCRSVVIDSLSRTAVHELLADADIQLKAHMAHFLLYHICIIPAEEFSTEYLRPQVHCIASYRQHANPSASCVSLAHETPPTASILDATSRGLFSALPHEPSSPADGVTLKAPQSQVTLKGLIPHLGRHVFVIHFYQAEHPGFPTEVIVNGGRQWSGSFLASFCPHLLGCRDQVISDGQVEFDISEAEVAVTVKIPDGKSLTLVRVLVVPAENYDYQILHKTTVDKSSEFISSCGGDSFYIDPQAASGFCKNSARSLVAFYHNGAIPCECDPAGTAGHHCSPEGGQCPCRPNVIGRQCSRCATGYYGFPYCKPCNCGRRLCEEVTGKCLCPPHTVRPQCEVCEMNSFNFHPVAGCDVCNCSRKGTIEAAVSECDRDSGQCRCKPRVTGQQCDKCAPGFYQFPECVPCSCNRDGTEPSVCDPETGACMCKENVEGPQCQLCREGSFYLDPTNPKGCTKCFCFGVNTDCQSSHKQRAKFVDMMGWRLETADGVDVPVSFNPGSNSMVADLQELPPSVHSASWVAPPSYLGDKVSSYGGYLTYHAKSFGLPGDMVLLGKQPDVQLTGQHMSLIHKEPSDPRPDRLHHGRVQVIEGNFRHEGSSAPVSREELMTVLSRLERLHIRGLHFTETQRLTLGEVGLEEASDTGSGPRAHLVEMCACPPDYTGDSCQGCRPGYYWDNKSLPVGRCVPCNCNGHSNRCQDGSGICINCQHNTAGEHCERCQAGHYGNAIHGSCRVCPCPHTNSFATGCAVDGGAVRCACKPGYTGTQCERCAPGYFGNPQKFGGSCQPCNCNSNGQLGPCDPLTGDCVNQEPKDGSPAEECDDCDSCVMTLLNDLASMGEELRLVKSKLQGLSVSTGALEQIRHMETQAKDLRNQLLGFRSATSSHGSKMDDLEKELSHLNREFETLQEKAQVNSRKAQTLYNNIDQTIQSAKELDMKIKNIVQNVHILLKQMARPGGEGTDLPVGDWSRELAEAQRMMRDLRSRDFKKHLQEAEAEKMEAQLLLHRIRTWLESHQVENNGLLKNIRDSLNDYEDKLQDLRSILQEAAAQAKQATGINHENEGVLGAIQRQMKEMDSLKNDFTKYLATADSSLLQTNNLLQQMDKSQKEYESLAAALNGARQELSDRVRELSRSGGKAPLVVEAEKHAQSLQELAKQLEEIKRNTSGDELVRCAVDAATAYENILNAIRAAEDAASKATSASKSAFQTVIKEDLPKRAKTLSSDSEELLNEAKMTQKRLQQVSPALNSLQQTLKTVSVQKDLLDANLTVARDDLHGIQRGDIDSVVIGAKSMVREANGITSEVLDGLNPIQTDLGRIKDSYESARREDFSKALVDANNSVKKLTRKLPDLFIKIESINQQLLPLGNISDNVDRIRELIQQARDAANKVAIPMRFNGKSGVEVRLPNDLEDLKGYTSLSLFLQRPDLRENGGTEDMFVMYLGNKDASKDYIGMAVVDGQLTCVYNLGDREAEVQIDQVLTESESQEAVMDRVKFQRIYQFAKLNYTKEATSTKPKAPGVYDMESASSNTLLNLDPENAVFYVGGYPPGFELPRRLRFPPYKGCIELDDLNENVLSLYNFKTTFNLNTTEVEPCRRRKEESDKNYFEGTGYARIPTQPNAPFPNFMQTIQTTVDRGLLFFAENQDNFISLNIEDGNLMVKYKLNSEPPKEKGIRDTINNGRDHMILISIGKSQKRMLINMNKHSIIIEGEIFDFSTYYLGGIPIAIRERFNISTPAFQGCMKNLKKTSGVVRLNDTVGVTKKCSEDWKLVRTASFSRGGQMSFTNLDVPSLDRFQLSFGFQTFQPSGTLLNHQTRTSSLLVTLEDGHIALSTRDSSSPIFKSPGTYMDGLLHHVSVISDTSGLRLLIDDQVLRRNQRLASFSNAQQSLSMGGGYFEGCISNVFVQRMSQSPEVLDMASKSTKRDAFLGGCSLNKPPFLMLFKSPKGFNKARSFNVNQLLQDAPQAARSIEAWQDGKSCLPPLNTKATHRALQFGDSPTSHLLFKLPQELLKPRLQFSLDIQTTSSRGLVFHTGTRDSFVALYLSEGHVIFALGAGGKKLRLRSKERYHDGKWHSVVFGLSGRKVHLVVDGLRAQEGSLPGNSTISPREQVYLGLSPSRKSKSLPQHSFVGCLRNFQLDSKPLDSPSARSGVSPCLGGSLEKGIYFSQGGGHVVLANSVSLEPALTLTLSIRPRSLTGVLIHIASQSGEHLSVYMEAGKVTTSMNSEAGGTVTSITPKRSLCDGQWHSVTVSIKQHTLHLELDTDNSYTAGQLSFPPNSTRGSLHIGGVPDKLKMLTLPVWNSFFGCLKNIQVNHIPVPITEATDVQGSVSLNGCPDH</sequence>
<gene>
    <name type="primary">Lama3</name>
</gene>
<reference key="1">
    <citation type="journal article" date="1995" name="J. Biol. Chem.">
        <title>Cloning and complete primary structure of the mouse laminin alpha 3 chain. Distinct expression pattern of the laminin alpha 3A and alpha 3B chain isoforms.</title>
        <authorList>
            <person name="Galliano M.-F."/>
            <person name="Aberdam D."/>
            <person name="Aguzzi A."/>
            <person name="Ortonne J.-P."/>
            <person name="Meneguzzi G."/>
        </authorList>
    </citation>
    <scope>NUCLEOTIDE SEQUENCE [MRNA] (ISOFORM A)</scope>
    <scope>NUCLEOTIDE SEQUENCE [MRNA] OF 765-3330 (ISOFORM B)</scope>
    <source>
        <strain>BALB/cJ</strain>
        <tissue>Lung</tissue>
    </source>
</reference>
<reference key="2">
    <citation type="submission" date="1997-04" db="EMBL/GenBank/DDBJ databases">
        <authorList>
            <person name="Aberdam D."/>
        </authorList>
    </citation>
    <scope>SEQUENCE REVISION</scope>
</reference>
<reference key="3">
    <citation type="journal article" date="2009" name="PLoS Biol.">
        <title>Lineage-specific biology revealed by a finished genome assembly of the mouse.</title>
        <authorList>
            <person name="Church D.M."/>
            <person name="Goodstadt L."/>
            <person name="Hillier L.W."/>
            <person name="Zody M.C."/>
            <person name="Goldstein S."/>
            <person name="She X."/>
            <person name="Bult C.J."/>
            <person name="Agarwala R."/>
            <person name="Cherry J.L."/>
            <person name="DiCuccio M."/>
            <person name="Hlavina W."/>
            <person name="Kapustin Y."/>
            <person name="Meric P."/>
            <person name="Maglott D."/>
            <person name="Birtle Z."/>
            <person name="Marques A.C."/>
            <person name="Graves T."/>
            <person name="Zhou S."/>
            <person name="Teague B."/>
            <person name="Potamousis K."/>
            <person name="Churas C."/>
            <person name="Place M."/>
            <person name="Herschleb J."/>
            <person name="Runnheim R."/>
            <person name="Forrest D."/>
            <person name="Amos-Landgraf J."/>
            <person name="Schwartz D.C."/>
            <person name="Cheng Z."/>
            <person name="Lindblad-Toh K."/>
            <person name="Eichler E.E."/>
            <person name="Ponting C.P."/>
        </authorList>
    </citation>
    <scope>NUCLEOTIDE SEQUENCE [LARGE SCALE GENOMIC DNA]</scope>
    <source>
        <strain>C57BL/6J</strain>
    </source>
</reference>
<reference key="4">
    <citation type="journal article" date="2002" name="Biochem. J.">
        <title>Complete sequence, recombinant analysis and binding to laminins and sulphated ligands of the N-terminal domains of laminin alpha3B and alpha5 chains.</title>
        <authorList>
            <person name="Garbe J.H."/>
            <person name="Gohring W."/>
            <person name="Mann K."/>
            <person name="Timpl R."/>
            <person name="Sasaki T."/>
        </authorList>
    </citation>
    <scope>NUCLEOTIDE SEQUENCE [MRNA] OF 1-58 (ISOFORM B)</scope>
    <scope>PROTEIN SEQUENCE OF 32-38</scope>
</reference>
<reference key="5">
    <citation type="journal article" date="1997" name="J. Cell Biol.">
        <title>The laminin alpha chains: expression, developmental transitions, and chromosomal locations of alpha1-5, identification of heterotrimeric laminins 8-11, and cloning of a novel alpha3 isoform.</title>
        <authorList>
            <person name="Miner J.H."/>
            <person name="Patton B.L."/>
            <person name="Lentz S.I."/>
            <person name="Gilbert D.J."/>
            <person name="Snider W.D."/>
            <person name="Jenkins N.A."/>
            <person name="Copeland N.G."/>
            <person name="Sanes J.R."/>
        </authorList>
    </citation>
    <scope>NUCLEOTIDE SEQUENCE [MRNA] OF 50-776 (ISOFORM B)</scope>
    <source>
        <strain>ICR</strain>
    </source>
</reference>
<reference key="6">
    <citation type="journal article" date="1994" name="Mamm. Genome">
        <title>Assignment of mouse nicein genes to chromosomes 1 and 18.</title>
        <authorList>
            <person name="Aberdam D."/>
            <person name="Galliano M.-F."/>
            <person name="Mattei M.-G."/>
            <person name="Pisani-Spadafora A."/>
            <person name="Ortonne J.-P."/>
            <person name="Meneguzzi G."/>
        </authorList>
    </citation>
    <scope>NUCLEOTIDE SEQUENCE [MRNA] OF 1813-2531 (ISOFORM B)</scope>
    <source>
        <tissue>Lung</tissue>
    </source>
</reference>
<reference key="7">
    <citation type="journal article" date="2010" name="Cell">
        <title>A tissue-specific atlas of mouse protein phosphorylation and expression.</title>
        <authorList>
            <person name="Huttlin E.L."/>
            <person name="Jedrychowski M.P."/>
            <person name="Elias J.E."/>
            <person name="Goswami T."/>
            <person name="Rad R."/>
            <person name="Beausoleil S.A."/>
            <person name="Villen J."/>
            <person name="Haas W."/>
            <person name="Sowa M.E."/>
            <person name="Gygi S.P."/>
        </authorList>
    </citation>
    <scope>IDENTIFICATION BY MASS SPECTROMETRY [LARGE SCALE ANALYSIS]</scope>
    <source>
        <tissue>Lung</tissue>
    </source>
</reference>
<dbReference type="EMBL" id="X84013">
    <property type="protein sequence ID" value="CAA58836.1"/>
    <property type="molecule type" value="mRNA"/>
</dbReference>
<dbReference type="EMBL" id="X84014">
    <property type="protein sequence ID" value="CAA58837.1"/>
    <property type="status" value="ALT_FRAME"/>
    <property type="molecule type" value="mRNA"/>
</dbReference>
<dbReference type="EMBL" id="AC102131">
    <property type="status" value="NOT_ANNOTATED_CDS"/>
    <property type="molecule type" value="Genomic_DNA"/>
</dbReference>
<dbReference type="EMBL" id="AC102248">
    <property type="status" value="NOT_ANNOTATED_CDS"/>
    <property type="molecule type" value="Genomic_DNA"/>
</dbReference>
<dbReference type="EMBL" id="AC139027">
    <property type="status" value="NOT_ANNOTATED_CDS"/>
    <property type="molecule type" value="Genomic_DNA"/>
</dbReference>
<dbReference type="EMBL" id="AC157909">
    <property type="status" value="NOT_ANNOTATED_CDS"/>
    <property type="molecule type" value="Genomic_DNA"/>
</dbReference>
<dbReference type="EMBL" id="AJ293592">
    <property type="protein sequence ID" value="CAB99254.2"/>
    <property type="molecule type" value="mRNA"/>
</dbReference>
<dbReference type="EMBL" id="U88353">
    <property type="protein sequence ID" value="AAC53179.1"/>
    <property type="molecule type" value="mRNA"/>
</dbReference>
<dbReference type="EMBL" id="L20478">
    <property type="protein sequence ID" value="AAA68091.1"/>
    <property type="molecule type" value="mRNA"/>
</dbReference>
<dbReference type="CCDS" id="CCDS50222.1">
    <molecule id="Q61789-1"/>
</dbReference>
<dbReference type="CCDS" id="CCDS84360.1">
    <molecule id="Q61789-2"/>
</dbReference>
<dbReference type="RefSeq" id="NP_001334390.1">
    <molecule id="Q61789-2"/>
    <property type="nucleotide sequence ID" value="NM_001347461.2"/>
</dbReference>
<dbReference type="RefSeq" id="NP_034810.1">
    <molecule id="Q61789-1"/>
    <property type="nucleotide sequence ID" value="NM_010680.2"/>
</dbReference>
<dbReference type="SMR" id="Q61789"/>
<dbReference type="BioGRID" id="201098">
    <property type="interactions" value="8"/>
</dbReference>
<dbReference type="ComplexPortal" id="CPX-3012">
    <molecule id="Q61789-2"/>
    <property type="entry name" value="Laminin-332 complex variant A"/>
</dbReference>
<dbReference type="ComplexPortal" id="CPX-3013">
    <molecule id="Q61789-2"/>
    <property type="entry name" value="Laminin-311 complex variant A"/>
</dbReference>
<dbReference type="ComplexPortal" id="CPX-3014">
    <molecule id="Q61789-2"/>
    <property type="entry name" value="Laminin-321 complex"/>
</dbReference>
<dbReference type="ComplexPortal" id="CPX-3164">
    <molecule id="Q61789-1"/>
    <property type="entry name" value="Laminin-332 complex variant B"/>
</dbReference>
<dbReference type="ComplexPortal" id="CPX-3167">
    <molecule id="Q61789-1"/>
    <property type="entry name" value="Laminin-311 complex variant B"/>
</dbReference>
<dbReference type="FunCoup" id="Q61789">
    <property type="interactions" value="446"/>
</dbReference>
<dbReference type="IntAct" id="Q61789">
    <property type="interactions" value="1"/>
</dbReference>
<dbReference type="MINT" id="Q61789"/>
<dbReference type="STRING" id="10090.ENSMUSP00000089703"/>
<dbReference type="GlyCosmos" id="Q61789">
    <property type="glycosylation" value="13 sites, No reported glycans"/>
</dbReference>
<dbReference type="GlyGen" id="Q61789">
    <property type="glycosylation" value="14 sites, 7 N-linked glycans (8 sites)"/>
</dbReference>
<dbReference type="iPTMnet" id="Q61789"/>
<dbReference type="PhosphoSitePlus" id="Q61789"/>
<dbReference type="SwissPalm" id="Q61789"/>
<dbReference type="PaxDb" id="10090-ENSMUSP00000089703"/>
<dbReference type="PeptideAtlas" id="Q61789"/>
<dbReference type="ProteomicsDB" id="264908">
    <molecule id="Q61789-1"/>
</dbReference>
<dbReference type="ProteomicsDB" id="264909">
    <molecule id="Q61789-2"/>
</dbReference>
<dbReference type="Antibodypedia" id="1948">
    <property type="antibodies" value="197 antibodies from 30 providers"/>
</dbReference>
<dbReference type="Ensembl" id="ENSMUST00000092070.13">
    <molecule id="Q61789-1"/>
    <property type="protein sequence ID" value="ENSMUSP00000089703.7"/>
    <property type="gene ID" value="ENSMUSG00000024421.17"/>
</dbReference>
<dbReference type="Ensembl" id="ENSMUST00000188815.2">
    <molecule id="Q61789-2"/>
    <property type="protein sequence ID" value="ENSMUSP00000140104.2"/>
    <property type="gene ID" value="ENSMUSG00000024421.17"/>
</dbReference>
<dbReference type="GeneID" id="16774"/>
<dbReference type="KEGG" id="mmu:16774"/>
<dbReference type="UCSC" id="uc008ecf.2">
    <molecule id="Q61789-1"/>
    <property type="organism name" value="mouse"/>
</dbReference>
<dbReference type="UCSC" id="uc008ech.1">
    <molecule id="Q61789-2"/>
    <property type="organism name" value="mouse"/>
</dbReference>
<dbReference type="AGR" id="MGI:99909"/>
<dbReference type="CTD" id="3909"/>
<dbReference type="MGI" id="MGI:99909">
    <property type="gene designation" value="Lama3"/>
</dbReference>
<dbReference type="VEuPathDB" id="HostDB:ENSMUSG00000024421"/>
<dbReference type="eggNOG" id="KOG1836">
    <property type="taxonomic scope" value="Eukaryota"/>
</dbReference>
<dbReference type="GeneTree" id="ENSGT00940000155638"/>
<dbReference type="HOGENOM" id="CLU_000301_1_0_1"/>
<dbReference type="InParanoid" id="Q61789"/>
<dbReference type="OMA" id="GECKCLT"/>
<dbReference type="OrthoDB" id="18487at2759"/>
<dbReference type="PhylomeDB" id="Q61789"/>
<dbReference type="TreeFam" id="TF335359"/>
<dbReference type="BioGRID-ORCS" id="16774">
    <property type="hits" value="1 hit in 78 CRISPR screens"/>
</dbReference>
<dbReference type="ChiTaRS" id="Lama3">
    <property type="organism name" value="mouse"/>
</dbReference>
<dbReference type="PRO" id="PR:Q61789"/>
<dbReference type="Proteomes" id="UP000000589">
    <property type="component" value="Chromosome 18"/>
</dbReference>
<dbReference type="RNAct" id="Q61789">
    <property type="molecule type" value="protein"/>
</dbReference>
<dbReference type="Bgee" id="ENSMUSG00000024421">
    <property type="expression patterns" value="Expressed in molar tooth and 122 other cell types or tissues"/>
</dbReference>
<dbReference type="GO" id="GO:0005912">
    <property type="term" value="C:adherens junction"/>
    <property type="evidence" value="ECO:0007669"/>
    <property type="project" value="Ensembl"/>
</dbReference>
<dbReference type="GO" id="GO:0005604">
    <property type="term" value="C:basement membrane"/>
    <property type="evidence" value="ECO:0000314"/>
    <property type="project" value="MGI"/>
</dbReference>
<dbReference type="GO" id="GO:0062023">
    <property type="term" value="C:collagen-containing extracellular matrix"/>
    <property type="evidence" value="ECO:0007005"/>
    <property type="project" value="BHF-UCL"/>
</dbReference>
<dbReference type="GO" id="GO:0005783">
    <property type="term" value="C:endoplasmic reticulum"/>
    <property type="evidence" value="ECO:0007669"/>
    <property type="project" value="Ensembl"/>
</dbReference>
<dbReference type="GO" id="GO:0005576">
    <property type="term" value="C:extracellular region"/>
    <property type="evidence" value="ECO:0000304"/>
    <property type="project" value="Reactome"/>
</dbReference>
<dbReference type="GO" id="GO:0030056">
    <property type="term" value="C:hemidesmosome"/>
    <property type="evidence" value="ECO:0007669"/>
    <property type="project" value="Ensembl"/>
</dbReference>
<dbReference type="GO" id="GO:0005608">
    <property type="term" value="C:laminin-3 complex"/>
    <property type="evidence" value="ECO:0007669"/>
    <property type="project" value="Ensembl"/>
</dbReference>
<dbReference type="GO" id="GO:0005610">
    <property type="term" value="C:laminin-5 complex"/>
    <property type="evidence" value="ECO:0000314"/>
    <property type="project" value="MGI"/>
</dbReference>
<dbReference type="GO" id="GO:0005102">
    <property type="term" value="F:signaling receptor binding"/>
    <property type="evidence" value="ECO:0007669"/>
    <property type="project" value="InterPro"/>
</dbReference>
<dbReference type="GO" id="GO:0098609">
    <property type="term" value="P:cell-cell adhesion"/>
    <property type="evidence" value="ECO:0007669"/>
    <property type="project" value="Ensembl"/>
</dbReference>
<dbReference type="GO" id="GO:0035987">
    <property type="term" value="P:endodermal cell differentiation"/>
    <property type="evidence" value="ECO:0007669"/>
    <property type="project" value="Ensembl"/>
</dbReference>
<dbReference type="GO" id="GO:0031581">
    <property type="term" value="P:hemidesmosome assembly"/>
    <property type="evidence" value="ECO:0007669"/>
    <property type="project" value="Ensembl"/>
</dbReference>
<dbReference type="GO" id="GO:0030155">
    <property type="term" value="P:regulation of cell adhesion"/>
    <property type="evidence" value="ECO:0007669"/>
    <property type="project" value="InterPro"/>
</dbReference>
<dbReference type="GO" id="GO:0030334">
    <property type="term" value="P:regulation of cell migration"/>
    <property type="evidence" value="ECO:0007669"/>
    <property type="project" value="InterPro"/>
</dbReference>
<dbReference type="GO" id="GO:0045995">
    <property type="term" value="P:regulation of embryonic development"/>
    <property type="evidence" value="ECO:0007669"/>
    <property type="project" value="InterPro"/>
</dbReference>
<dbReference type="CDD" id="cd00055">
    <property type="entry name" value="EGF_Lam"/>
    <property type="match status" value="13"/>
</dbReference>
<dbReference type="CDD" id="cd00110">
    <property type="entry name" value="LamG"/>
    <property type="match status" value="5"/>
</dbReference>
<dbReference type="FunFam" id="2.10.25.10:FF:000011">
    <property type="entry name" value="Cadherin EGF LAG seven-pass G-type receptor"/>
    <property type="match status" value="1"/>
</dbReference>
<dbReference type="FunFam" id="2.10.25.10:FF:000083">
    <property type="entry name" value="Laminin subunit alpha"/>
    <property type="match status" value="2"/>
</dbReference>
<dbReference type="FunFam" id="2.10.25.10:FF:000388">
    <property type="entry name" value="Laminin subunit alpha"/>
    <property type="match status" value="1"/>
</dbReference>
<dbReference type="FunFam" id="2.10.25.10:FF:000090">
    <property type="entry name" value="laminin subunit alpha"/>
    <property type="match status" value="1"/>
</dbReference>
<dbReference type="FunFam" id="2.10.25.10:FF:000069">
    <property type="entry name" value="Laminin subunit alpha 1"/>
    <property type="match status" value="1"/>
</dbReference>
<dbReference type="FunFam" id="2.10.25.10:FF:000033">
    <property type="entry name" value="Laminin subunit alpha 2"/>
    <property type="match status" value="1"/>
</dbReference>
<dbReference type="FunFam" id="2.10.25.10:FF:000034">
    <property type="entry name" value="Laminin subunit alpha 3"/>
    <property type="match status" value="1"/>
</dbReference>
<dbReference type="FunFam" id="2.10.25.10:FF:000084">
    <property type="entry name" value="Laminin subunit alpha 3"/>
    <property type="match status" value="1"/>
</dbReference>
<dbReference type="FunFam" id="2.10.25.10:FF:000390">
    <property type="entry name" value="Laminin subunit alpha 3"/>
    <property type="match status" value="1"/>
</dbReference>
<dbReference type="FunFam" id="2.60.120.200:FF:000056">
    <property type="entry name" value="Laminin subunit alpha 3"/>
    <property type="match status" value="1"/>
</dbReference>
<dbReference type="FunFam" id="2.60.120.200:FF:000092">
    <property type="entry name" value="Laminin subunit alpha 3"/>
    <property type="match status" value="1"/>
</dbReference>
<dbReference type="FunFam" id="2.60.120.200:FF:000093">
    <property type="entry name" value="Laminin subunit alpha 3"/>
    <property type="match status" value="1"/>
</dbReference>
<dbReference type="FunFam" id="2.60.120.200:FF:000102">
    <property type="entry name" value="Laminin subunit alpha 3"/>
    <property type="match status" value="1"/>
</dbReference>
<dbReference type="FunFam" id="2.60.120.200:FF:000109">
    <property type="entry name" value="Laminin subunit alpha 3"/>
    <property type="match status" value="1"/>
</dbReference>
<dbReference type="FunFam" id="2.10.25.10:FF:000209">
    <property type="entry name" value="Laminin subunit alpha 5"/>
    <property type="match status" value="1"/>
</dbReference>
<dbReference type="FunFam" id="2.60.120.260:FF:000022">
    <property type="entry name" value="Laminin subunit alpha 5"/>
    <property type="match status" value="1"/>
</dbReference>
<dbReference type="FunFam" id="2.10.25.10:FF:000188">
    <property type="entry name" value="Laminin subunit gamma 2"/>
    <property type="match status" value="1"/>
</dbReference>
<dbReference type="Gene3D" id="1.20.5.170">
    <property type="match status" value="1"/>
</dbReference>
<dbReference type="Gene3D" id="2.60.120.200">
    <property type="match status" value="5"/>
</dbReference>
<dbReference type="Gene3D" id="2.60.120.260">
    <property type="entry name" value="Galactose-binding domain-like"/>
    <property type="match status" value="1"/>
</dbReference>
<dbReference type="Gene3D" id="2.10.25.10">
    <property type="entry name" value="Laminin"/>
    <property type="match status" value="12"/>
</dbReference>
<dbReference type="InterPro" id="IPR013320">
    <property type="entry name" value="ConA-like_dom_sf"/>
</dbReference>
<dbReference type="InterPro" id="IPR000742">
    <property type="entry name" value="EGF-like_dom"/>
</dbReference>
<dbReference type="InterPro" id="IPR050440">
    <property type="entry name" value="Laminin/Netrin_ECM"/>
</dbReference>
<dbReference type="InterPro" id="IPR009254">
    <property type="entry name" value="Laminin_aI"/>
</dbReference>
<dbReference type="InterPro" id="IPR010307">
    <property type="entry name" value="Laminin_dom_II"/>
</dbReference>
<dbReference type="InterPro" id="IPR001791">
    <property type="entry name" value="Laminin_G"/>
</dbReference>
<dbReference type="InterPro" id="IPR000034">
    <property type="entry name" value="Laminin_IV"/>
</dbReference>
<dbReference type="InterPro" id="IPR008211">
    <property type="entry name" value="Laminin_N"/>
</dbReference>
<dbReference type="InterPro" id="IPR002049">
    <property type="entry name" value="LE_dom"/>
</dbReference>
<dbReference type="InterPro" id="IPR056863">
    <property type="entry name" value="LMN_ATRN_NET-like_EGF"/>
</dbReference>
<dbReference type="PANTHER" id="PTHR10574:SF445">
    <property type="entry name" value="LAMININ SUBUNIT ALPHA 3"/>
    <property type="match status" value="1"/>
</dbReference>
<dbReference type="PANTHER" id="PTHR10574">
    <property type="entry name" value="NETRIN/LAMININ-RELATED"/>
    <property type="match status" value="1"/>
</dbReference>
<dbReference type="Pfam" id="PF00053">
    <property type="entry name" value="EGF_laminin"/>
    <property type="match status" value="11"/>
</dbReference>
<dbReference type="Pfam" id="PF24973">
    <property type="entry name" value="EGF_LMN_ATRN"/>
    <property type="match status" value="1"/>
</dbReference>
<dbReference type="Pfam" id="PF00052">
    <property type="entry name" value="Laminin_B"/>
    <property type="match status" value="1"/>
</dbReference>
<dbReference type="Pfam" id="PF00054">
    <property type="entry name" value="Laminin_G_1"/>
    <property type="match status" value="1"/>
</dbReference>
<dbReference type="Pfam" id="PF02210">
    <property type="entry name" value="Laminin_G_2"/>
    <property type="match status" value="4"/>
</dbReference>
<dbReference type="Pfam" id="PF06008">
    <property type="entry name" value="Laminin_I"/>
    <property type="match status" value="1"/>
</dbReference>
<dbReference type="Pfam" id="PF06009">
    <property type="entry name" value="Laminin_II"/>
    <property type="match status" value="1"/>
</dbReference>
<dbReference type="Pfam" id="PF00055">
    <property type="entry name" value="Laminin_N"/>
    <property type="match status" value="1"/>
</dbReference>
<dbReference type="PRINTS" id="PR00011">
    <property type="entry name" value="EGFLAMININ"/>
</dbReference>
<dbReference type="SMART" id="SM00181">
    <property type="entry name" value="EGF"/>
    <property type="match status" value="8"/>
</dbReference>
<dbReference type="SMART" id="SM00180">
    <property type="entry name" value="EGF_Lam"/>
    <property type="match status" value="14"/>
</dbReference>
<dbReference type="SMART" id="SM00281">
    <property type="entry name" value="LamB"/>
    <property type="match status" value="1"/>
</dbReference>
<dbReference type="SMART" id="SM00282">
    <property type="entry name" value="LamG"/>
    <property type="match status" value="5"/>
</dbReference>
<dbReference type="SMART" id="SM00136">
    <property type="entry name" value="LamNT"/>
    <property type="match status" value="1"/>
</dbReference>
<dbReference type="SUPFAM" id="SSF49899">
    <property type="entry name" value="Concanavalin A-like lectins/glucanases"/>
    <property type="match status" value="5"/>
</dbReference>
<dbReference type="SUPFAM" id="SSF57196">
    <property type="entry name" value="EGF/Laminin"/>
    <property type="match status" value="12"/>
</dbReference>
<dbReference type="PROSITE" id="PS00022">
    <property type="entry name" value="EGF_1"/>
    <property type="match status" value="11"/>
</dbReference>
<dbReference type="PROSITE" id="PS01186">
    <property type="entry name" value="EGF_2"/>
    <property type="match status" value="1"/>
</dbReference>
<dbReference type="PROSITE" id="PS01248">
    <property type="entry name" value="EGF_LAM_1"/>
    <property type="match status" value="12"/>
</dbReference>
<dbReference type="PROSITE" id="PS50027">
    <property type="entry name" value="EGF_LAM_2"/>
    <property type="match status" value="13"/>
</dbReference>
<dbReference type="PROSITE" id="PS50025">
    <property type="entry name" value="LAM_G_DOMAIN"/>
    <property type="match status" value="5"/>
</dbReference>
<dbReference type="PROSITE" id="PS51115">
    <property type="entry name" value="LAMININ_IVA"/>
    <property type="match status" value="1"/>
</dbReference>
<dbReference type="PROSITE" id="PS51117">
    <property type="entry name" value="LAMININ_NTER"/>
    <property type="match status" value="1"/>
</dbReference>
<organism>
    <name type="scientific">Mus musculus</name>
    <name type="common">Mouse</name>
    <dbReference type="NCBI Taxonomy" id="10090"/>
    <lineage>
        <taxon>Eukaryota</taxon>
        <taxon>Metazoa</taxon>
        <taxon>Chordata</taxon>
        <taxon>Craniata</taxon>
        <taxon>Vertebrata</taxon>
        <taxon>Euteleostomi</taxon>
        <taxon>Mammalia</taxon>
        <taxon>Eutheria</taxon>
        <taxon>Euarchontoglires</taxon>
        <taxon>Glires</taxon>
        <taxon>Rodentia</taxon>
        <taxon>Myomorpha</taxon>
        <taxon>Muroidea</taxon>
        <taxon>Muridae</taxon>
        <taxon>Murinae</taxon>
        <taxon>Mus</taxon>
        <taxon>Mus</taxon>
    </lineage>
</organism>
<accession>Q61789</accession>
<accession>E9PUR4</accession>
<accession>O08751</accession>
<accession>Q61788</accession>
<accession>Q61966</accession>
<accession>Q9JHQ7</accession>
<comment type="function">
    <text>Binding to cells via a high affinity receptor, laminin is thought to mediate the attachment, migration and organization of cells into tissues during embryonic development by interacting with other extracellular matrix components.</text>
</comment>
<comment type="function">
    <text evidence="1">Laminin-5 is thought to be involved in (1) cell adhesion via integrin alpha-3/beta-1 in focal adhesion and integrin alpha-6/beta-4 in hemidesmosomes, (2) signal transduction via tyrosine phosphorylation of pp125-FAK and p80, (3) differentiation of keratinocytes.</text>
</comment>
<comment type="subunit">
    <text>Laminin is a complex glycoprotein, consisting of three different polypeptide chains (alpha, beta, gamma), which are bound to each other by disulfide bonds into a cross-shaped molecule comprising one long and three short arms with globules at each end. Alpha-3 is a subunit of laminin-5 (laminin-332 or epiligrin/kalinin/nicein), laminin-6 (laminin-311 or K-laminin) and laminin-7 (laminin-321 or KS-laminin).</text>
</comment>
<comment type="subcellular location">
    <subcellularLocation>
        <location>Secreted</location>
        <location>Extracellular space</location>
        <location>Extracellular matrix</location>
        <location>Basement membrane</location>
    </subcellularLocation>
    <text>Major component.</text>
</comment>
<comment type="alternative products">
    <event type="alternative splicing"/>
    <isoform>
        <id>Q61789-1</id>
        <name>B</name>
        <sequence type="displayed"/>
    </isoform>
    <isoform>
        <id>Q61789-2</id>
        <name>A</name>
        <sequence type="described" ref="VSP_003038 VSP_003039"/>
    </isoform>
</comment>
<comment type="tissue specificity">
    <text>Basal membrane of the upper alimentary tract and urinary and nasal epithelia, salivary glands and teeth (both variants). Isoform A is predominantly expressed in skin, hair follicles and developing neurons of the trigeminal ganglion. Isoform B was found in bronchi, alveoli, stomach, intestinal crypts, whisker pads, CNS, telencephalic neuroectoderm, thalamus, Rathke pouch and periventricular subependymal germinal layer.</text>
</comment>
<comment type="domain">
    <text>The alpha-helical domains I and II are thought to interact with other laminin chains to form a coiled coil structure.</text>
</comment>
<comment type="domain">
    <text>Domains IV and G are globular.</text>
</comment>
<comment type="sequence caution" evidence="9">
    <conflict type="frameshift">
        <sequence resource="EMBL-CDS" id="CAA58837"/>
    </conflict>
</comment>
<feature type="signal peptide" evidence="7">
    <location>
        <begin position="1"/>
        <end position="31"/>
    </location>
</feature>
<feature type="chain" id="PRO_0000017059" description="Laminin subunit alpha-3">
    <location>
        <begin position="32"/>
        <end position="3330"/>
    </location>
</feature>
<feature type="domain" description="Laminin N-terminal" evidence="6">
    <location>
        <begin position="40"/>
        <end position="295"/>
    </location>
</feature>
<feature type="domain" description="Laminin EGF-like 1" evidence="5">
    <location>
        <begin position="296"/>
        <end position="350"/>
    </location>
</feature>
<feature type="domain" description="Laminin EGF-like 2" evidence="5">
    <location>
        <begin position="353"/>
        <end position="420"/>
    </location>
</feature>
<feature type="domain" description="Laminin EGF-like 3" evidence="5">
    <location>
        <begin position="423"/>
        <end position="464"/>
    </location>
</feature>
<feature type="domain" description="Laminin EGF-like 4" evidence="5">
    <location>
        <begin position="488"/>
        <end position="530"/>
    </location>
</feature>
<feature type="domain" description="Laminin EGF-like 5" evidence="5">
    <location>
        <begin position="533"/>
        <end position="576"/>
    </location>
</feature>
<feature type="domain" description="Laminin EGF-like 6" evidence="5">
    <location>
        <begin position="582"/>
        <end position="625"/>
    </location>
</feature>
<feature type="domain" description="Laminin EGF-like 7" evidence="5">
    <location>
        <begin position="628"/>
        <end position="678"/>
    </location>
</feature>
<feature type="domain" description="Laminin EGF-like 8" evidence="5">
    <location>
        <begin position="681"/>
        <end position="725"/>
    </location>
</feature>
<feature type="domain" description="Laminin EGF-like 9" evidence="5">
    <location>
        <begin position="1309"/>
        <end position="1352"/>
    </location>
</feature>
<feature type="domain" description="Laminin EGF-like 10" evidence="5">
    <location>
        <begin position="1353"/>
        <end position="1401"/>
    </location>
</feature>
<feature type="domain" description="Laminin EGF-like 11" evidence="5">
    <location>
        <begin position="1402"/>
        <end position="1452"/>
    </location>
</feature>
<feature type="domain" description="Laminin EGF-like 12; first part" evidence="5">
    <location>
        <begin position="1453"/>
        <end position="1462"/>
    </location>
</feature>
<feature type="domain" description="Laminin IV type A" evidence="4">
    <location>
        <begin position="1466"/>
        <end position="1650"/>
    </location>
</feature>
<feature type="domain" description="Laminin EGF-like 12; second part" evidence="5">
    <location>
        <begin position="1651"/>
        <end position="1683"/>
    </location>
</feature>
<feature type="domain" description="Laminin EGF-like 13" evidence="5">
    <location>
        <begin position="1684"/>
        <end position="1730"/>
    </location>
</feature>
<feature type="domain" description="Laminin EGF-like 14" evidence="5">
    <location>
        <begin position="1731"/>
        <end position="1783"/>
    </location>
</feature>
<feature type="domain" description="Laminin EGF-like 15; truncated" evidence="5">
    <location>
        <begin position="1784"/>
        <end position="1818"/>
    </location>
</feature>
<feature type="domain" description="Laminin G-like 1" evidence="3">
    <location>
        <begin position="2386"/>
        <end position="2587"/>
    </location>
</feature>
<feature type="domain" description="Laminin G-like 2" evidence="3">
    <location>
        <begin position="2594"/>
        <end position="2756"/>
    </location>
</feature>
<feature type="domain" description="Laminin G-like 3" evidence="3">
    <location>
        <begin position="2763"/>
        <end position="2923"/>
    </location>
</feature>
<feature type="domain" description="Laminin G-like 4" evidence="3">
    <location>
        <begin position="2983"/>
        <end position="3147"/>
    </location>
</feature>
<feature type="domain" description="Laminin G-like 5" evidence="3">
    <location>
        <begin position="3154"/>
        <end position="3327"/>
    </location>
</feature>
<feature type="region of interest" description="Domain V">
    <location>
        <begin position="295"/>
        <end position="725"/>
    </location>
</feature>
<feature type="region of interest" description="Domain IV 1 (domain IV B)">
    <location>
        <begin position="793"/>
        <end position="1262"/>
    </location>
</feature>
<feature type="region of interest" description="Domain III B">
    <location>
        <begin position="1263"/>
        <end position="1462"/>
    </location>
</feature>
<feature type="region of interest" description="Domain III A">
    <location>
        <begin position="1651"/>
        <end position="1818"/>
    </location>
</feature>
<feature type="region of interest" description="Domain II and I">
    <location>
        <begin position="1819"/>
        <end position="2385"/>
    </location>
</feature>
<feature type="coiled-coil region" evidence="2">
    <location>
        <begin position="1851"/>
        <end position="1980"/>
    </location>
</feature>
<feature type="coiled-coil region" evidence="2">
    <location>
        <begin position="2012"/>
        <end position="2057"/>
    </location>
</feature>
<feature type="coiled-coil region" evidence="2">
    <location>
        <begin position="2088"/>
        <end position="2165"/>
    </location>
</feature>
<feature type="coiled-coil region" evidence="2">
    <location>
        <begin position="2211"/>
        <end position="2238"/>
    </location>
</feature>
<feature type="coiled-coil region" evidence="2">
    <location>
        <begin position="2318"/>
        <end position="2383"/>
    </location>
</feature>
<feature type="short sequence motif" description="Cell attachment site" evidence="2">
    <location>
        <begin position="2274"/>
        <end position="2276"/>
    </location>
</feature>
<feature type="glycosylation site" description="N-linked (GlcNAc...) asparagine" evidence="2">
    <location>
        <position position="139"/>
    </location>
</feature>
<feature type="glycosylation site" description="N-linked (GlcNAc...) asparagine" evidence="2">
    <location>
        <position position="445"/>
    </location>
</feature>
<feature type="glycosylation site" description="N-linked (GlcNAc...) asparagine" evidence="2">
    <location>
        <position position="1354"/>
    </location>
</feature>
<feature type="glycosylation site" description="N-linked (GlcNAc...) asparagine" evidence="2">
    <location>
        <position position="1673"/>
    </location>
</feature>
<feature type="glycosylation site" description="N-linked (GlcNAc...) asparagine" evidence="2">
    <location>
        <position position="2159"/>
    </location>
</feature>
<feature type="glycosylation site" description="N-linked (GlcNAc...) asparagine" evidence="2">
    <location>
        <position position="2261"/>
    </location>
</feature>
<feature type="glycosylation site" description="N-linked (GlcNAc...) asparagine" evidence="2">
    <location>
        <position position="2332"/>
    </location>
</feature>
<feature type="glycosylation site" description="N-linked (GlcNAc...) asparagine" evidence="2">
    <location>
        <position position="2361"/>
    </location>
</feature>
<feature type="glycosylation site" description="N-linked (GlcNAc...) asparagine" evidence="2">
    <location>
        <position position="2498"/>
    </location>
</feature>
<feature type="glycosylation site" description="N-linked (GlcNAc...) asparagine" evidence="2">
    <location>
        <position position="2580"/>
    </location>
</feature>
<feature type="glycosylation site" description="N-linked (GlcNAc...) asparagine" evidence="2">
    <location>
        <position position="2747"/>
    </location>
</feature>
<feature type="glycosylation site" description="N-linked (GlcNAc...) asparagine" evidence="2">
    <location>
        <position position="3094"/>
    </location>
</feature>
<feature type="glycosylation site" description="N-linked (GlcNAc...) asparagine" evidence="2">
    <location>
        <position position="3270"/>
    </location>
</feature>
<feature type="disulfide bond" evidence="1">
    <location>
        <begin position="296"/>
        <end position="305"/>
    </location>
</feature>
<feature type="disulfide bond" evidence="1">
    <location>
        <begin position="298"/>
        <end position="316"/>
    </location>
</feature>
<feature type="disulfide bond" evidence="1">
    <location>
        <begin position="318"/>
        <end position="327"/>
    </location>
</feature>
<feature type="disulfide bond" evidence="1">
    <location>
        <begin position="330"/>
        <end position="350"/>
    </location>
</feature>
<feature type="disulfide bond" evidence="1">
    <location>
        <begin position="353"/>
        <end position="362"/>
    </location>
</feature>
<feature type="disulfide bond" evidence="1">
    <location>
        <begin position="355"/>
        <end position="387"/>
    </location>
</feature>
<feature type="disulfide bond" evidence="1">
    <location>
        <begin position="390"/>
        <end position="399"/>
    </location>
</feature>
<feature type="disulfide bond" evidence="1">
    <location>
        <begin position="402"/>
        <end position="420"/>
    </location>
</feature>
<feature type="disulfide bond" evidence="1">
    <location>
        <begin position="423"/>
        <end position="433"/>
    </location>
</feature>
<feature type="disulfide bond" evidence="1">
    <location>
        <begin position="425"/>
        <end position="440"/>
    </location>
</feature>
<feature type="disulfide bond" evidence="1">
    <location>
        <begin position="442"/>
        <end position="451"/>
    </location>
</feature>
<feature type="disulfide bond" evidence="1">
    <location>
        <begin position="454"/>
        <end position="464"/>
    </location>
</feature>
<feature type="disulfide bond" evidence="1">
    <location>
        <begin position="488"/>
        <end position="500"/>
    </location>
</feature>
<feature type="disulfide bond" evidence="1">
    <location>
        <begin position="490"/>
        <end position="506"/>
    </location>
</feature>
<feature type="disulfide bond" evidence="1">
    <location>
        <begin position="508"/>
        <end position="517"/>
    </location>
</feature>
<feature type="disulfide bond" evidence="1">
    <location>
        <begin position="520"/>
        <end position="530"/>
    </location>
</feature>
<feature type="disulfide bond" evidence="1">
    <location>
        <begin position="533"/>
        <end position="545"/>
    </location>
</feature>
<feature type="disulfide bond" evidence="1">
    <location>
        <begin position="535"/>
        <end position="552"/>
    </location>
</feature>
<feature type="disulfide bond" evidence="1">
    <location>
        <begin position="554"/>
        <end position="563"/>
    </location>
</feature>
<feature type="disulfide bond" evidence="1">
    <location>
        <begin position="566"/>
        <end position="583"/>
    </location>
</feature>
<feature type="disulfide bond" evidence="1">
    <location>
        <begin position="628"/>
        <end position="642"/>
    </location>
</feature>
<feature type="disulfide bond" evidence="1">
    <location>
        <begin position="630"/>
        <end position="649"/>
    </location>
</feature>
<feature type="disulfide bond" evidence="1">
    <location>
        <begin position="651"/>
        <end position="660"/>
    </location>
</feature>
<feature type="disulfide bond" evidence="1">
    <location>
        <begin position="663"/>
        <end position="678"/>
    </location>
</feature>
<feature type="disulfide bond" evidence="1">
    <location>
        <begin position="681"/>
        <end position="693"/>
    </location>
</feature>
<feature type="disulfide bond" evidence="1">
    <location>
        <begin position="683"/>
        <end position="700"/>
    </location>
</feature>
<feature type="disulfide bond" evidence="1">
    <location>
        <begin position="702"/>
        <end position="711"/>
    </location>
</feature>
<feature type="disulfide bond" evidence="1">
    <location>
        <begin position="1309"/>
        <end position="1316"/>
    </location>
</feature>
<feature type="disulfide bond" evidence="1">
    <location>
        <begin position="1311"/>
        <end position="1323"/>
    </location>
</feature>
<feature type="disulfide bond" evidence="1">
    <location>
        <begin position="1325"/>
        <end position="1334"/>
    </location>
</feature>
<feature type="disulfide bond" evidence="1">
    <location>
        <begin position="1337"/>
        <end position="1350"/>
    </location>
</feature>
<feature type="disulfide bond" evidence="1">
    <location>
        <begin position="1353"/>
        <end position="1368"/>
    </location>
</feature>
<feature type="disulfide bond" evidence="1">
    <location>
        <begin position="1355"/>
        <end position="1375"/>
    </location>
</feature>
<feature type="disulfide bond" evidence="1">
    <location>
        <begin position="1377"/>
        <end position="1386"/>
    </location>
</feature>
<feature type="disulfide bond" evidence="1">
    <location>
        <begin position="1389"/>
        <end position="1399"/>
    </location>
</feature>
<feature type="disulfide bond" evidence="1">
    <location>
        <begin position="1402"/>
        <end position="1414"/>
    </location>
</feature>
<feature type="disulfide bond" evidence="1">
    <location>
        <begin position="1404"/>
        <end position="1421"/>
    </location>
</feature>
<feature type="disulfide bond" evidence="1">
    <location>
        <begin position="1423"/>
        <end position="1432"/>
    </location>
</feature>
<feature type="disulfide bond" evidence="1">
    <location>
        <begin position="1435"/>
        <end position="1450"/>
    </location>
</feature>
<feature type="disulfide bond" evidence="1">
    <location>
        <begin position="1684"/>
        <end position="1693"/>
    </location>
</feature>
<feature type="disulfide bond" evidence="1">
    <location>
        <begin position="1686"/>
        <end position="1700"/>
    </location>
</feature>
<feature type="disulfide bond" evidence="1">
    <location>
        <begin position="1703"/>
        <end position="1712"/>
    </location>
</feature>
<feature type="disulfide bond" evidence="1">
    <location>
        <begin position="1715"/>
        <end position="1728"/>
    </location>
</feature>
<feature type="disulfide bond" evidence="1">
    <location>
        <begin position="1731"/>
        <end position="1743"/>
    </location>
</feature>
<feature type="disulfide bond" evidence="1">
    <location>
        <begin position="1733"/>
        <end position="1752"/>
    </location>
</feature>
<feature type="disulfide bond" evidence="1">
    <location>
        <begin position="1754"/>
        <end position="1763"/>
    </location>
</feature>
<feature type="disulfide bond" evidence="1">
    <location>
        <begin position="1766"/>
        <end position="1781"/>
    </location>
</feature>
<feature type="disulfide bond" description="Interchain" evidence="9">
    <location>
        <position position="1819"/>
    </location>
</feature>
<feature type="disulfide bond" description="Interchain" evidence="9">
    <location>
        <position position="1822"/>
    </location>
</feature>
<feature type="disulfide bond" evidence="1">
    <location>
        <begin position="2557"/>
        <end position="2587"/>
    </location>
</feature>
<feature type="disulfide bond" evidence="1">
    <location>
        <begin position="2733"/>
        <end position="2756"/>
    </location>
</feature>
<feature type="disulfide bond" evidence="1">
    <location>
        <begin position="2891"/>
        <end position="2923"/>
    </location>
</feature>
<feature type="disulfide bond" evidence="1">
    <location>
        <begin position="3124"/>
        <end position="3147"/>
    </location>
</feature>
<feature type="disulfide bond" evidence="1">
    <location>
        <begin position="3299"/>
        <end position="3327"/>
    </location>
</feature>
<feature type="splice variant" id="VSP_003038" description="In isoform A." evidence="8">
    <location>
        <begin position="1"/>
        <end position="1619"/>
    </location>
</feature>
<feature type="splice variant" id="VSP_003039" description="In isoform A." evidence="8">
    <original>FTETQRLTLGEVGLEEASDTGSGPRAHLVEMCACPPDYTGDSC</original>
    <variation>MLPAVRWSAWSTGWLWIFGAALGQCLGYGSEQQRVAFLQRPSQNHLQASYMELRPS</variation>
    <location>
        <begin position="1620"/>
        <end position="1662"/>
    </location>
</feature>
<feature type="sequence conflict" description="In Ref. 1; CAA58837." evidence="9" ref="1">
    <original>A</original>
    <variation>R</variation>
    <location>
        <position position="982"/>
    </location>
</feature>
<feature type="sequence conflict" description="In Ref. 1; CAA58837." evidence="9" ref="1">
    <original>W</original>
    <variation>R</variation>
    <location>
        <position position="1150"/>
    </location>
</feature>
<feature type="sequence conflict" description="In Ref. 1; CAA58837." evidence="9" ref="1">
    <original>E</original>
    <variation>K</variation>
    <location>
        <position position="1224"/>
    </location>
</feature>
<feature type="sequence conflict" description="In Ref. 1; CAA58837." evidence="9" ref="1">
    <original>G</original>
    <variation>GH</variation>
    <location>
        <position position="1272"/>
    </location>
</feature>
<feature type="sequence conflict" description="In Ref. 1; CAA58837." evidence="9" ref="1">
    <original>R</original>
    <variation>S</variation>
    <location>
        <position position="1291"/>
    </location>
</feature>
<feature type="sequence conflict" description="In Ref. 1; CAA58837." evidence="9" ref="1">
    <original>E</original>
    <variation>K</variation>
    <location>
        <position position="1398"/>
    </location>
</feature>
<feature type="sequence conflict" description="In Ref. 1; CAA58837." evidence="9" ref="1">
    <original>H</original>
    <variation>R</variation>
    <location>
        <position position="1466"/>
    </location>
</feature>
<feature type="sequence conflict" description="In Ref. 1; CAA58837." evidence="9" ref="1">
    <original>R</original>
    <variation>V</variation>
    <location>
        <position position="1479"/>
    </location>
</feature>
<feature type="sequence conflict" description="In Ref. 1; CAA58837." evidence="9" ref="1">
    <original>V</original>
    <variation>F</variation>
    <location>
        <position position="1488"/>
    </location>
</feature>
<feature type="sequence conflict" description="In Ref. 1; CAA58837." evidence="9" ref="1">
    <original>SS</original>
    <variation>II</variation>
    <location>
        <begin position="1527"/>
        <end position="1528"/>
    </location>
</feature>
<feature type="sequence conflict" description="In Ref. 1; CAA58837." evidence="9" ref="1">
    <original>S</original>
    <variation>P</variation>
    <location>
        <position position="1608"/>
    </location>
</feature>
<feature type="sequence conflict" description="In Ref. 1; CAA58836/CAA58837 and 6; AAA68091." evidence="9" ref="1 6">
    <original>KK</original>
    <variation>QN</variation>
    <location>
        <begin position="1983"/>
        <end position="1984"/>
    </location>
</feature>
<feature type="sequence conflict" description="In Ref. 1; CAA58836/CAA58837 and 6; AAA68091." evidence="9" ref="1 6">
    <original>Q</original>
    <variation>G</variation>
    <location>
        <position position="1987"/>
    </location>
</feature>
<feature type="sequence conflict" description="In Ref. 1; CAA58836/CAA58837 and 6; AAA68091." evidence="9" ref="1 6">
    <original>R</original>
    <variation>G</variation>
    <location>
        <position position="2463"/>
    </location>
</feature>
<feature type="sequence conflict" description="In Ref. 1; CAA58836/CAA58837 and 6; AAA68091." evidence="9" ref="1 6">
    <original>F</original>
    <variation>S</variation>
    <location>
        <position position="2488"/>
    </location>
</feature>
<feature type="sequence conflict" description="In Ref. 1; CAA58836/CAA58837." evidence="9" ref="1">
    <original>NFMQ</original>
    <variation>KLSW</variation>
    <location>
        <begin position="2617"/>
        <end position="2620"/>
    </location>
</feature>
<feature type="sequence conflict" description="In Ref. 1; CAA58836/CAA58837." evidence="9" ref="1">
    <original>NI</original>
    <variation>PL</variation>
    <location>
        <begin position="2724"/>
        <end position="2725"/>
    </location>
</feature>
<feature type="sequence conflict" description="In Ref. 1; CAA58836/CAA58837." evidence="9" ref="1">
    <original>D</original>
    <variation>Y</variation>
    <location>
        <position position="3257"/>
    </location>
</feature>
<proteinExistence type="evidence at protein level"/>
<protein>
    <recommendedName>
        <fullName>Laminin subunit alpha-3</fullName>
    </recommendedName>
    <alternativeName>
        <fullName>Epiligrin subunit alpha</fullName>
    </alternativeName>
    <alternativeName>
        <fullName>Kalinin subunit alpha</fullName>
    </alternativeName>
    <alternativeName>
        <fullName>Laminin-5 subunit alpha</fullName>
    </alternativeName>
    <alternativeName>
        <fullName>Laminin-6 subunit alpha</fullName>
    </alternativeName>
    <alternativeName>
        <fullName>Laminin-7 subunit alpha</fullName>
    </alternativeName>
    <alternativeName>
        <fullName>Nicein subunit alpha</fullName>
    </alternativeName>
</protein>
<name>LAMA3_MOUSE</name>